<protein>
    <recommendedName>
        <fullName evidence="1">Portal protein</fullName>
    </recommendedName>
</protein>
<organism>
    <name type="scientific">Human herpesvirus 6B (strain Z29)</name>
    <name type="common">HHV-6 variant B</name>
    <name type="synonym">Human B lymphotropic virus</name>
    <dbReference type="NCBI Taxonomy" id="36351"/>
    <lineage>
        <taxon>Viruses</taxon>
        <taxon>Duplodnaviria</taxon>
        <taxon>Heunggongvirae</taxon>
        <taxon>Peploviricota</taxon>
        <taxon>Herviviricetes</taxon>
        <taxon>Herpesvirales</taxon>
        <taxon>Orthoherpesviridae</taxon>
        <taxon>Betaherpesvirinae</taxon>
        <taxon>Roseolovirus</taxon>
        <taxon>Roseolovirus humanbeta6b</taxon>
        <taxon>Human herpesvirus 6B</taxon>
    </lineage>
</organism>
<evidence type="ECO:0000255" key="1">
    <source>
        <dbReference type="HAMAP-Rule" id="MF_04012"/>
    </source>
</evidence>
<evidence type="ECO:0000256" key="2">
    <source>
        <dbReference type="SAM" id="MobiDB-lite"/>
    </source>
</evidence>
<proteinExistence type="inferred from homology"/>
<organismHost>
    <name type="scientific">Homo sapiens</name>
    <name type="common">Human</name>
    <dbReference type="NCBI Taxonomy" id="9606"/>
</organismHost>
<accession>P52454</accession>
<comment type="function">
    <text evidence="1">Forms a portal in the viral capsid through which viral DNA is translocated during DNA packaging. Assembles as a dodecamer at a single fivefold axe of the T=16 icosahedric capsid. Binds to the molecular motor that translocates the viral DNA, termed terminase.</text>
</comment>
<comment type="subunit">
    <text evidence="1">Homododecamerizes. Interacts with terminase subunits TRM1 and TRM3.</text>
</comment>
<comment type="subcellular location">
    <subcellularLocation>
        <location evidence="1">Virion</location>
    </subcellularLocation>
    <subcellularLocation>
        <location evidence="1">Host nucleus</location>
    </subcellularLocation>
</comment>
<comment type="similarity">
    <text evidence="1">Belongs to the herpesviridae portal protein family.</text>
</comment>
<gene>
    <name type="primary">U76</name>
    <name type="synonym">CB3L</name>
</gene>
<name>PORTL_HHV6Z</name>
<feature type="chain" id="PRO_0000115908" description="Portal protein">
    <location>
        <begin position="1"/>
        <end position="662"/>
    </location>
</feature>
<feature type="region of interest" description="Disordered" evidence="2">
    <location>
        <begin position="1"/>
        <end position="35"/>
    </location>
</feature>
<feature type="compositionally biased region" description="Polar residues" evidence="2">
    <location>
        <begin position="1"/>
        <end position="26"/>
    </location>
</feature>
<reference key="1">
    <citation type="journal article" date="1996" name="Arch. Virol.">
        <title>Restriction endonuclease mapping and molecular cloning of the human herpesvirus 6 variant B strain Z29 genome.</title>
        <authorList>
            <person name="Lindquester G.J."/>
            <person name="Inoue N."/>
            <person name="Allen R.D."/>
            <person name="Castelli J.W."/>
            <person name="Stamey F.R."/>
            <person name="Dambaugh T.R."/>
            <person name="O'Brian J.J."/>
            <person name="Danovich R.M."/>
            <person name="Frenkel N."/>
            <person name="Pellett P.E."/>
        </authorList>
    </citation>
    <scope>NUCLEOTIDE SEQUENCE [GENOMIC DNA]</scope>
</reference>
<reference key="2">
    <citation type="journal article" date="1999" name="J. Virol.">
        <title>Human herpesvirus 6B genome sequence: coding content and comparison with human herpesvirus 6A.</title>
        <authorList>
            <person name="Dominguez G."/>
            <person name="Dambaugh T.R."/>
            <person name="Stamey F.R."/>
            <person name="Dewhurst S."/>
            <person name="Inoue N."/>
            <person name="Pellett P.E."/>
        </authorList>
    </citation>
    <scope>NUCLEOTIDE SEQUENCE [LARGE SCALE GENOMIC DNA]</scope>
</reference>
<keyword id="KW-1048">Host nucleus</keyword>
<keyword id="KW-1185">Reference proteome</keyword>
<keyword id="KW-0231">Viral genome packaging</keyword>
<keyword id="KW-1188">Viral release from host cell</keyword>
<keyword id="KW-0946">Virion</keyword>
<sequence length="662" mass="77200">MHRASANSPLNSVSGSMMWRNQSSGRRPSKRLSDNEATLSTINSILGAEDMLSKNLLSYLPPNNEEIDMIYPSEQIMTFIEMLHGHKNFFKGQTIHNALRDSAVLKKQIAYGVAQALLNSVSIQQIHDEWKRHVRSFPFHNKKLSFQDYFSVWAHAIKQVILGDISNIINFILQSIDNSHYNRYVDWICTVGIVPFMRTTPTAPNLYNLLQQVSSKLIHDIVRHKQNIVTPILLGLSSVIIPDFHNIKIFRDRNSEQISCFKNKKAIAFFTYSTPYVIRNRLMLTTPLAHLSPELKKHNSLRRHQKMCQLLNTFPIKVLTAAKTDVTNKKIMDMIEKEEKNSDAKKSLIKFLLNLSDSKSKIGIRDSVEGFIQEITPSIIDQNKLMLNRGQFRKRSAIDTGERDVRDLFKKQIIKCMEEQIQTQMDEIETLKTTNQMFERKIKDLHSLLETNNDCDRYNPDLDHDLENLSLSRALNIVQRLPFTSVSIDDTRSVANSFFSQYIPDTQYADKRIDQLWEMEYMRTFRLRKNVNNQGQEESITYSNYSIELLIVPFLRRLLNIYNLESIPEEFLFLSLGEILLAIYESSKIKHYLRLVYVRELNQISEVYNLTQTHPENNEPIFDSNIFSPNPENEILEKIKRIRNLRRIQHLTRPNYPKGDQD</sequence>
<dbReference type="EMBL" id="AF157706">
    <property type="protein sequence ID" value="AAB06359.1"/>
    <property type="molecule type" value="Genomic_DNA"/>
</dbReference>
<dbReference type="PIR" id="T44221">
    <property type="entry name" value="T44221"/>
</dbReference>
<dbReference type="RefSeq" id="NP_050255.1">
    <property type="nucleotide sequence ID" value="NC_000898.1"/>
</dbReference>
<dbReference type="SMR" id="P52454"/>
<dbReference type="DNASU" id="1497076"/>
<dbReference type="GeneID" id="1497076"/>
<dbReference type="KEGG" id="vg:1497076"/>
<dbReference type="Proteomes" id="UP000006930">
    <property type="component" value="Segment"/>
</dbReference>
<dbReference type="GO" id="GO:0042025">
    <property type="term" value="C:host cell nucleus"/>
    <property type="evidence" value="ECO:0007669"/>
    <property type="project" value="UniProtKB-SubCell"/>
</dbReference>
<dbReference type="GO" id="GO:0044423">
    <property type="term" value="C:virion component"/>
    <property type="evidence" value="ECO:0007669"/>
    <property type="project" value="UniProtKB-KW"/>
</dbReference>
<dbReference type="GO" id="GO:0051276">
    <property type="term" value="P:chromosome organization"/>
    <property type="evidence" value="ECO:0007669"/>
    <property type="project" value="InterPro"/>
</dbReference>
<dbReference type="HAMAP" id="MF_04012">
    <property type="entry name" value="HSV_PORTL"/>
    <property type="match status" value="1"/>
</dbReference>
<dbReference type="InterPro" id="IPR002660">
    <property type="entry name" value="Herpes_Portal"/>
</dbReference>
<dbReference type="Pfam" id="PF01763">
    <property type="entry name" value="Herpes_UL6"/>
    <property type="match status" value="1"/>
</dbReference>